<feature type="chain" id="PRO_1000014794" description="Large ribosomal subunit protein bL9">
    <location>
        <begin position="1"/>
        <end position="149"/>
    </location>
</feature>
<reference key="1">
    <citation type="submission" date="2006-09" db="EMBL/GenBank/DDBJ databases">
        <authorList>
            <consortium name="The Klebsiella pneumonia Genome Sequencing Project"/>
            <person name="McClelland M."/>
            <person name="Sanderson E.K."/>
            <person name="Spieth J."/>
            <person name="Clifton W.S."/>
            <person name="Latreille P."/>
            <person name="Sabo A."/>
            <person name="Pepin K."/>
            <person name="Bhonagiri V."/>
            <person name="Porwollik S."/>
            <person name="Ali J."/>
            <person name="Wilson R.K."/>
        </authorList>
    </citation>
    <scope>NUCLEOTIDE SEQUENCE [LARGE SCALE GENOMIC DNA]</scope>
    <source>
        <strain>ATCC 700721 / MGH 78578</strain>
    </source>
</reference>
<protein>
    <recommendedName>
        <fullName evidence="1">Large ribosomal subunit protein bL9</fullName>
    </recommendedName>
    <alternativeName>
        <fullName evidence="2">50S ribosomal protein L9</fullName>
    </alternativeName>
</protein>
<accession>A6THB4</accession>
<proteinExistence type="inferred from homology"/>
<comment type="function">
    <text evidence="1">Binds to the 23S rRNA.</text>
</comment>
<comment type="similarity">
    <text evidence="1">Belongs to the bacterial ribosomal protein bL9 family.</text>
</comment>
<evidence type="ECO:0000255" key="1">
    <source>
        <dbReference type="HAMAP-Rule" id="MF_00503"/>
    </source>
</evidence>
<evidence type="ECO:0000305" key="2"/>
<name>RL9_KLEP7</name>
<gene>
    <name evidence="1" type="primary">rplI</name>
    <name type="ordered locus">KPN78578_45240</name>
    <name type="ORF">KPN_04597</name>
</gene>
<keyword id="KW-0687">Ribonucleoprotein</keyword>
<keyword id="KW-0689">Ribosomal protein</keyword>
<keyword id="KW-0694">RNA-binding</keyword>
<keyword id="KW-0699">rRNA-binding</keyword>
<sequence>MQVILLDKVANLGSLGDQVNVKAGYARNFLVPQGKAVPATKKNVEFFEARRAELEAKLADVLAAAEARAEQINALESVTIASKAGDEGKLFGSIGTRDIADAVTAAGVKVAKSEVRLPNGVLRNVGEHEVNFQVHSEVFAKVIINVVAE</sequence>
<dbReference type="EMBL" id="CP000647">
    <property type="protein sequence ID" value="ABR79948.1"/>
    <property type="molecule type" value="Genomic_DNA"/>
</dbReference>
<dbReference type="RefSeq" id="WP_002886682.1">
    <property type="nucleotide sequence ID" value="NC_009648.1"/>
</dbReference>
<dbReference type="SMR" id="A6THB4"/>
<dbReference type="STRING" id="272620.KPN_04597"/>
<dbReference type="jPOST" id="A6THB4"/>
<dbReference type="PaxDb" id="272620-KPN_04597"/>
<dbReference type="EnsemblBacteria" id="ABR79948">
    <property type="protein sequence ID" value="ABR79948"/>
    <property type="gene ID" value="KPN_04597"/>
</dbReference>
<dbReference type="KEGG" id="kpn:KPN_04597"/>
<dbReference type="HOGENOM" id="CLU_078938_4_1_6"/>
<dbReference type="Proteomes" id="UP000000265">
    <property type="component" value="Chromosome"/>
</dbReference>
<dbReference type="GO" id="GO:1990904">
    <property type="term" value="C:ribonucleoprotein complex"/>
    <property type="evidence" value="ECO:0007669"/>
    <property type="project" value="UniProtKB-KW"/>
</dbReference>
<dbReference type="GO" id="GO:0005840">
    <property type="term" value="C:ribosome"/>
    <property type="evidence" value="ECO:0007669"/>
    <property type="project" value="UniProtKB-KW"/>
</dbReference>
<dbReference type="GO" id="GO:0019843">
    <property type="term" value="F:rRNA binding"/>
    <property type="evidence" value="ECO:0007669"/>
    <property type="project" value="UniProtKB-UniRule"/>
</dbReference>
<dbReference type="GO" id="GO:0003735">
    <property type="term" value="F:structural constituent of ribosome"/>
    <property type="evidence" value="ECO:0007669"/>
    <property type="project" value="InterPro"/>
</dbReference>
<dbReference type="GO" id="GO:0006412">
    <property type="term" value="P:translation"/>
    <property type="evidence" value="ECO:0007669"/>
    <property type="project" value="UniProtKB-UniRule"/>
</dbReference>
<dbReference type="FunFam" id="3.10.430.100:FF:000001">
    <property type="entry name" value="50S ribosomal protein L9"/>
    <property type="match status" value="1"/>
</dbReference>
<dbReference type="FunFam" id="3.40.5.10:FF:000001">
    <property type="entry name" value="50S ribosomal protein L9"/>
    <property type="match status" value="1"/>
</dbReference>
<dbReference type="Gene3D" id="3.10.430.100">
    <property type="entry name" value="Ribosomal protein L9, C-terminal domain"/>
    <property type="match status" value="1"/>
</dbReference>
<dbReference type="Gene3D" id="3.40.5.10">
    <property type="entry name" value="Ribosomal protein L9, N-terminal domain"/>
    <property type="match status" value="1"/>
</dbReference>
<dbReference type="HAMAP" id="MF_00503">
    <property type="entry name" value="Ribosomal_bL9"/>
    <property type="match status" value="1"/>
</dbReference>
<dbReference type="InterPro" id="IPR000244">
    <property type="entry name" value="Ribosomal_bL9"/>
</dbReference>
<dbReference type="InterPro" id="IPR009027">
    <property type="entry name" value="Ribosomal_bL9/RNase_H1_N"/>
</dbReference>
<dbReference type="InterPro" id="IPR020594">
    <property type="entry name" value="Ribosomal_bL9_bac/chp"/>
</dbReference>
<dbReference type="InterPro" id="IPR020069">
    <property type="entry name" value="Ribosomal_bL9_C"/>
</dbReference>
<dbReference type="InterPro" id="IPR036791">
    <property type="entry name" value="Ribosomal_bL9_C_sf"/>
</dbReference>
<dbReference type="InterPro" id="IPR020070">
    <property type="entry name" value="Ribosomal_bL9_N"/>
</dbReference>
<dbReference type="InterPro" id="IPR036935">
    <property type="entry name" value="Ribosomal_bL9_N_sf"/>
</dbReference>
<dbReference type="NCBIfam" id="TIGR00158">
    <property type="entry name" value="L9"/>
    <property type="match status" value="1"/>
</dbReference>
<dbReference type="PANTHER" id="PTHR21368">
    <property type="entry name" value="50S RIBOSOMAL PROTEIN L9"/>
    <property type="match status" value="1"/>
</dbReference>
<dbReference type="Pfam" id="PF03948">
    <property type="entry name" value="Ribosomal_L9_C"/>
    <property type="match status" value="1"/>
</dbReference>
<dbReference type="Pfam" id="PF01281">
    <property type="entry name" value="Ribosomal_L9_N"/>
    <property type="match status" value="1"/>
</dbReference>
<dbReference type="SUPFAM" id="SSF55658">
    <property type="entry name" value="L9 N-domain-like"/>
    <property type="match status" value="1"/>
</dbReference>
<dbReference type="SUPFAM" id="SSF55653">
    <property type="entry name" value="Ribosomal protein L9 C-domain"/>
    <property type="match status" value="1"/>
</dbReference>
<dbReference type="PROSITE" id="PS00651">
    <property type="entry name" value="RIBOSOMAL_L9"/>
    <property type="match status" value="1"/>
</dbReference>
<organism>
    <name type="scientific">Klebsiella pneumoniae subsp. pneumoniae (strain ATCC 700721 / MGH 78578)</name>
    <dbReference type="NCBI Taxonomy" id="272620"/>
    <lineage>
        <taxon>Bacteria</taxon>
        <taxon>Pseudomonadati</taxon>
        <taxon>Pseudomonadota</taxon>
        <taxon>Gammaproteobacteria</taxon>
        <taxon>Enterobacterales</taxon>
        <taxon>Enterobacteriaceae</taxon>
        <taxon>Klebsiella/Raoultella group</taxon>
        <taxon>Klebsiella</taxon>
        <taxon>Klebsiella pneumoniae complex</taxon>
    </lineage>
</organism>